<dbReference type="EMBL" id="AL111168">
    <property type="protein sequence ID" value="CAL35688.1"/>
    <property type="molecule type" value="Genomic_DNA"/>
</dbReference>
<dbReference type="PIR" id="E81254">
    <property type="entry name" value="E81254"/>
</dbReference>
<dbReference type="RefSeq" id="WP_002781429.1">
    <property type="nucleotide sequence ID" value="NZ_SZUC01000002.1"/>
</dbReference>
<dbReference type="RefSeq" id="YP_002344960.1">
    <property type="nucleotide sequence ID" value="NC_002163.1"/>
</dbReference>
<dbReference type="SMR" id="Q9PM84"/>
<dbReference type="IntAct" id="Q9PM84">
    <property type="interactions" value="10"/>
</dbReference>
<dbReference type="STRING" id="192222.Cj1591"/>
<dbReference type="PaxDb" id="192222-Cj1591"/>
<dbReference type="EnsemblBacteria" id="CAL35688">
    <property type="protein sequence ID" value="CAL35688"/>
    <property type="gene ID" value="Cj1591"/>
</dbReference>
<dbReference type="GeneID" id="905861"/>
<dbReference type="GeneID" id="98394726"/>
<dbReference type="KEGG" id="cje:Cj1591"/>
<dbReference type="PATRIC" id="fig|192222.6.peg.1567"/>
<dbReference type="eggNOG" id="COG0257">
    <property type="taxonomic scope" value="Bacteria"/>
</dbReference>
<dbReference type="HOGENOM" id="CLU_135723_6_2_7"/>
<dbReference type="PRO" id="PR:Q9PM84"/>
<dbReference type="Proteomes" id="UP000000799">
    <property type="component" value="Chromosome"/>
</dbReference>
<dbReference type="GO" id="GO:0005737">
    <property type="term" value="C:cytoplasm"/>
    <property type="evidence" value="ECO:0007669"/>
    <property type="project" value="UniProtKB-ARBA"/>
</dbReference>
<dbReference type="GO" id="GO:1990904">
    <property type="term" value="C:ribonucleoprotein complex"/>
    <property type="evidence" value="ECO:0007669"/>
    <property type="project" value="UniProtKB-KW"/>
</dbReference>
<dbReference type="GO" id="GO:0005840">
    <property type="term" value="C:ribosome"/>
    <property type="evidence" value="ECO:0007669"/>
    <property type="project" value="UniProtKB-KW"/>
</dbReference>
<dbReference type="GO" id="GO:0003735">
    <property type="term" value="F:structural constituent of ribosome"/>
    <property type="evidence" value="ECO:0007669"/>
    <property type="project" value="InterPro"/>
</dbReference>
<dbReference type="GO" id="GO:0006412">
    <property type="term" value="P:translation"/>
    <property type="evidence" value="ECO:0007669"/>
    <property type="project" value="UniProtKB-UniRule"/>
</dbReference>
<dbReference type="HAMAP" id="MF_00251">
    <property type="entry name" value="Ribosomal_bL36"/>
    <property type="match status" value="1"/>
</dbReference>
<dbReference type="InterPro" id="IPR000473">
    <property type="entry name" value="Ribosomal_bL36"/>
</dbReference>
<dbReference type="InterPro" id="IPR035977">
    <property type="entry name" value="Ribosomal_bL36_sp"/>
</dbReference>
<dbReference type="NCBIfam" id="TIGR01022">
    <property type="entry name" value="rpmJ_bact"/>
    <property type="match status" value="1"/>
</dbReference>
<dbReference type="PANTHER" id="PTHR42888">
    <property type="entry name" value="50S RIBOSOMAL PROTEIN L36, CHLOROPLASTIC"/>
    <property type="match status" value="1"/>
</dbReference>
<dbReference type="PANTHER" id="PTHR42888:SF1">
    <property type="entry name" value="LARGE RIBOSOMAL SUBUNIT PROTEIN BL36C"/>
    <property type="match status" value="1"/>
</dbReference>
<dbReference type="Pfam" id="PF00444">
    <property type="entry name" value="Ribosomal_L36"/>
    <property type="match status" value="1"/>
</dbReference>
<dbReference type="SUPFAM" id="SSF57840">
    <property type="entry name" value="Ribosomal protein L36"/>
    <property type="match status" value="1"/>
</dbReference>
<dbReference type="PROSITE" id="PS00828">
    <property type="entry name" value="RIBOSOMAL_L36"/>
    <property type="match status" value="1"/>
</dbReference>
<evidence type="ECO:0000255" key="1">
    <source>
        <dbReference type="HAMAP-Rule" id="MF_00251"/>
    </source>
</evidence>
<evidence type="ECO:0000305" key="2"/>
<protein>
    <recommendedName>
        <fullName evidence="1">Large ribosomal subunit protein bL36</fullName>
    </recommendedName>
    <alternativeName>
        <fullName evidence="2">50S ribosomal protein L36</fullName>
    </alternativeName>
</protein>
<keyword id="KW-1185">Reference proteome</keyword>
<keyword id="KW-0687">Ribonucleoprotein</keyword>
<keyword id="KW-0689">Ribosomal protein</keyword>
<organism>
    <name type="scientific">Campylobacter jejuni subsp. jejuni serotype O:2 (strain ATCC 700819 / NCTC 11168)</name>
    <dbReference type="NCBI Taxonomy" id="192222"/>
    <lineage>
        <taxon>Bacteria</taxon>
        <taxon>Pseudomonadati</taxon>
        <taxon>Campylobacterota</taxon>
        <taxon>Epsilonproteobacteria</taxon>
        <taxon>Campylobacterales</taxon>
        <taxon>Campylobacteraceae</taxon>
        <taxon>Campylobacter</taxon>
    </lineage>
</organism>
<gene>
    <name evidence="1" type="primary">rpmJ</name>
    <name type="ordered locus">Cj1591</name>
</gene>
<proteinExistence type="inferred from homology"/>
<reference key="1">
    <citation type="journal article" date="2000" name="Nature">
        <title>The genome sequence of the food-borne pathogen Campylobacter jejuni reveals hypervariable sequences.</title>
        <authorList>
            <person name="Parkhill J."/>
            <person name="Wren B.W."/>
            <person name="Mungall K.L."/>
            <person name="Ketley J.M."/>
            <person name="Churcher C.M."/>
            <person name="Basham D."/>
            <person name="Chillingworth T."/>
            <person name="Davies R.M."/>
            <person name="Feltwell T."/>
            <person name="Holroyd S."/>
            <person name="Jagels K."/>
            <person name="Karlyshev A.V."/>
            <person name="Moule S."/>
            <person name="Pallen M.J."/>
            <person name="Penn C.W."/>
            <person name="Quail M.A."/>
            <person name="Rajandream M.A."/>
            <person name="Rutherford K.M."/>
            <person name="van Vliet A.H.M."/>
            <person name="Whitehead S."/>
            <person name="Barrell B.G."/>
        </authorList>
    </citation>
    <scope>NUCLEOTIDE SEQUENCE [LARGE SCALE GENOMIC DNA]</scope>
    <source>
        <strain>ATCC 700819 / NCTC 11168</strain>
    </source>
</reference>
<feature type="chain" id="PRO_0000126166" description="Large ribosomal subunit protein bL36">
    <location>
        <begin position="1"/>
        <end position="37"/>
    </location>
</feature>
<accession>Q9PM84</accession>
<accession>Q0P837</accession>
<comment type="similarity">
    <text evidence="1">Belongs to the bacterial ribosomal protein bL36 family.</text>
</comment>
<sequence length="37" mass="4364">MKVRPSVKKMCDKCKVVRRKGVVRIICENPKHKQRQG</sequence>
<name>RL36_CAMJE</name>